<sequence>MKSTRPFHPTPVITIDGPTASGKGTVAALLAAHLGFHLLDSGALYRLAALASVRYGIAAEDIDALVKLIDDLHITFREGCAQLDGVDVSNDIRAEAVGNRASAIAVHGPVRSALVARQRAFRKTPGLVADGRDMGTVIFPDAVLKVFLTASAEARAARRHKQLMQKGFSANIDDLLRDLRERDARDSNRAAAPLKPAADARLLDTSALSVDEAVDQVLQWYRALGQPA</sequence>
<organism>
    <name type="scientific">Burkholderia ambifaria (strain MC40-6)</name>
    <dbReference type="NCBI Taxonomy" id="398577"/>
    <lineage>
        <taxon>Bacteria</taxon>
        <taxon>Pseudomonadati</taxon>
        <taxon>Pseudomonadota</taxon>
        <taxon>Betaproteobacteria</taxon>
        <taxon>Burkholderiales</taxon>
        <taxon>Burkholderiaceae</taxon>
        <taxon>Burkholderia</taxon>
        <taxon>Burkholderia cepacia complex</taxon>
    </lineage>
</organism>
<reference key="1">
    <citation type="submission" date="2008-04" db="EMBL/GenBank/DDBJ databases">
        <title>Complete sequence of chromosome 1 of Burkholderia ambifaria MC40-6.</title>
        <authorList>
            <person name="Copeland A."/>
            <person name="Lucas S."/>
            <person name="Lapidus A."/>
            <person name="Glavina del Rio T."/>
            <person name="Dalin E."/>
            <person name="Tice H."/>
            <person name="Pitluck S."/>
            <person name="Chain P."/>
            <person name="Malfatti S."/>
            <person name="Shin M."/>
            <person name="Vergez L."/>
            <person name="Lang D."/>
            <person name="Schmutz J."/>
            <person name="Larimer F."/>
            <person name="Land M."/>
            <person name="Hauser L."/>
            <person name="Kyrpides N."/>
            <person name="Lykidis A."/>
            <person name="Ramette A."/>
            <person name="Konstantinidis K."/>
            <person name="Tiedje J."/>
            <person name="Richardson P."/>
        </authorList>
    </citation>
    <scope>NUCLEOTIDE SEQUENCE [LARGE SCALE GENOMIC DNA]</scope>
    <source>
        <strain>MC40-6</strain>
    </source>
</reference>
<gene>
    <name evidence="1" type="primary">cmk</name>
    <name type="ordered locus">BamMC406_0926</name>
</gene>
<feature type="chain" id="PRO_1000100650" description="Cytidylate kinase">
    <location>
        <begin position="1"/>
        <end position="228"/>
    </location>
</feature>
<feature type="binding site" evidence="1">
    <location>
        <begin position="17"/>
        <end position="25"/>
    </location>
    <ligand>
        <name>ATP</name>
        <dbReference type="ChEBI" id="CHEBI:30616"/>
    </ligand>
</feature>
<evidence type="ECO:0000255" key="1">
    <source>
        <dbReference type="HAMAP-Rule" id="MF_00238"/>
    </source>
</evidence>
<dbReference type="EC" id="2.7.4.25" evidence="1"/>
<dbReference type="EMBL" id="CP001025">
    <property type="protein sequence ID" value="ACB63417.1"/>
    <property type="molecule type" value="Genomic_DNA"/>
</dbReference>
<dbReference type="RefSeq" id="WP_012363346.1">
    <property type="nucleotide sequence ID" value="NC_010551.1"/>
</dbReference>
<dbReference type="SMR" id="B1YV34"/>
<dbReference type="KEGG" id="bac:BamMC406_0926"/>
<dbReference type="HOGENOM" id="CLU_079959_2_0_4"/>
<dbReference type="OrthoDB" id="9807434at2"/>
<dbReference type="Proteomes" id="UP000001680">
    <property type="component" value="Chromosome 1"/>
</dbReference>
<dbReference type="GO" id="GO:0005829">
    <property type="term" value="C:cytosol"/>
    <property type="evidence" value="ECO:0007669"/>
    <property type="project" value="TreeGrafter"/>
</dbReference>
<dbReference type="GO" id="GO:0005524">
    <property type="term" value="F:ATP binding"/>
    <property type="evidence" value="ECO:0007669"/>
    <property type="project" value="UniProtKB-UniRule"/>
</dbReference>
<dbReference type="GO" id="GO:0036430">
    <property type="term" value="F:CMP kinase activity"/>
    <property type="evidence" value="ECO:0007669"/>
    <property type="project" value="RHEA"/>
</dbReference>
<dbReference type="GO" id="GO:0036431">
    <property type="term" value="F:dCMP kinase activity"/>
    <property type="evidence" value="ECO:0007669"/>
    <property type="project" value="RHEA"/>
</dbReference>
<dbReference type="GO" id="GO:0015949">
    <property type="term" value="P:nucleobase-containing small molecule interconversion"/>
    <property type="evidence" value="ECO:0007669"/>
    <property type="project" value="TreeGrafter"/>
</dbReference>
<dbReference type="GO" id="GO:0006220">
    <property type="term" value="P:pyrimidine nucleotide metabolic process"/>
    <property type="evidence" value="ECO:0007669"/>
    <property type="project" value="UniProtKB-UniRule"/>
</dbReference>
<dbReference type="CDD" id="cd02020">
    <property type="entry name" value="CMPK"/>
    <property type="match status" value="1"/>
</dbReference>
<dbReference type="Gene3D" id="3.40.50.300">
    <property type="entry name" value="P-loop containing nucleotide triphosphate hydrolases"/>
    <property type="match status" value="1"/>
</dbReference>
<dbReference type="HAMAP" id="MF_00238">
    <property type="entry name" value="Cytidyl_kinase_type1"/>
    <property type="match status" value="1"/>
</dbReference>
<dbReference type="InterPro" id="IPR003136">
    <property type="entry name" value="Cytidylate_kin"/>
</dbReference>
<dbReference type="InterPro" id="IPR011994">
    <property type="entry name" value="Cytidylate_kinase_dom"/>
</dbReference>
<dbReference type="InterPro" id="IPR027417">
    <property type="entry name" value="P-loop_NTPase"/>
</dbReference>
<dbReference type="NCBIfam" id="TIGR00017">
    <property type="entry name" value="cmk"/>
    <property type="match status" value="1"/>
</dbReference>
<dbReference type="PANTHER" id="PTHR21299:SF2">
    <property type="entry name" value="CYTIDYLATE KINASE"/>
    <property type="match status" value="1"/>
</dbReference>
<dbReference type="PANTHER" id="PTHR21299">
    <property type="entry name" value="CYTIDYLATE KINASE/PANTOATE-BETA-ALANINE LIGASE"/>
    <property type="match status" value="1"/>
</dbReference>
<dbReference type="Pfam" id="PF02224">
    <property type="entry name" value="Cytidylate_kin"/>
    <property type="match status" value="1"/>
</dbReference>
<dbReference type="SUPFAM" id="SSF52540">
    <property type="entry name" value="P-loop containing nucleoside triphosphate hydrolases"/>
    <property type="match status" value="1"/>
</dbReference>
<comment type="catalytic activity">
    <reaction evidence="1">
        <text>CMP + ATP = CDP + ADP</text>
        <dbReference type="Rhea" id="RHEA:11600"/>
        <dbReference type="ChEBI" id="CHEBI:30616"/>
        <dbReference type="ChEBI" id="CHEBI:58069"/>
        <dbReference type="ChEBI" id="CHEBI:60377"/>
        <dbReference type="ChEBI" id="CHEBI:456216"/>
        <dbReference type="EC" id="2.7.4.25"/>
    </reaction>
</comment>
<comment type="catalytic activity">
    <reaction evidence="1">
        <text>dCMP + ATP = dCDP + ADP</text>
        <dbReference type="Rhea" id="RHEA:25094"/>
        <dbReference type="ChEBI" id="CHEBI:30616"/>
        <dbReference type="ChEBI" id="CHEBI:57566"/>
        <dbReference type="ChEBI" id="CHEBI:58593"/>
        <dbReference type="ChEBI" id="CHEBI:456216"/>
        <dbReference type="EC" id="2.7.4.25"/>
    </reaction>
</comment>
<comment type="subcellular location">
    <subcellularLocation>
        <location evidence="1">Cytoplasm</location>
    </subcellularLocation>
</comment>
<comment type="similarity">
    <text evidence="1">Belongs to the cytidylate kinase family. Type 1 subfamily.</text>
</comment>
<proteinExistence type="inferred from homology"/>
<protein>
    <recommendedName>
        <fullName evidence="1">Cytidylate kinase</fullName>
        <shortName evidence="1">CK</shortName>
        <ecNumber evidence="1">2.7.4.25</ecNumber>
    </recommendedName>
    <alternativeName>
        <fullName evidence="1">Cytidine monophosphate kinase</fullName>
        <shortName evidence="1">CMP kinase</shortName>
    </alternativeName>
</protein>
<accession>B1YV34</accession>
<keyword id="KW-0067">ATP-binding</keyword>
<keyword id="KW-0963">Cytoplasm</keyword>
<keyword id="KW-0418">Kinase</keyword>
<keyword id="KW-0547">Nucleotide-binding</keyword>
<keyword id="KW-0808">Transferase</keyword>
<name>KCY_BURA4</name>